<sequence>MNDSEFHQLADQLMLYIEETLDSFTGDSDIDYETNGGVMTLTFENGSKIVINRQEPLHQVWLATKAGGYHFNYRDGHWYCSRSGEEFLAKLSEAASAQAGENVSFG</sequence>
<gene>
    <name evidence="1" type="primary">cyaY</name>
    <name type="ordered locus">YPDSF_3464</name>
</gene>
<organism>
    <name type="scientific">Yersinia pestis (strain Pestoides F)</name>
    <dbReference type="NCBI Taxonomy" id="386656"/>
    <lineage>
        <taxon>Bacteria</taxon>
        <taxon>Pseudomonadati</taxon>
        <taxon>Pseudomonadota</taxon>
        <taxon>Gammaproteobacteria</taxon>
        <taxon>Enterobacterales</taxon>
        <taxon>Yersiniaceae</taxon>
        <taxon>Yersinia</taxon>
    </lineage>
</organism>
<proteinExistence type="inferred from homology"/>
<keyword id="KW-0408">Iron</keyword>
<keyword id="KW-0479">Metal-binding</keyword>
<accession>A4TRA5</accession>
<dbReference type="EMBL" id="CP000668">
    <property type="protein sequence ID" value="ABP41817.1"/>
    <property type="molecule type" value="Genomic_DNA"/>
</dbReference>
<dbReference type="RefSeq" id="WP_002211469.1">
    <property type="nucleotide sequence ID" value="NZ_CP009715.1"/>
</dbReference>
<dbReference type="SMR" id="A4TRA5"/>
<dbReference type="GeneID" id="57974862"/>
<dbReference type="KEGG" id="ypp:YPDSF_3464"/>
<dbReference type="PATRIC" id="fig|386656.14.peg.861"/>
<dbReference type="GO" id="GO:0005829">
    <property type="term" value="C:cytosol"/>
    <property type="evidence" value="ECO:0007669"/>
    <property type="project" value="TreeGrafter"/>
</dbReference>
<dbReference type="GO" id="GO:0008199">
    <property type="term" value="F:ferric iron binding"/>
    <property type="evidence" value="ECO:0007669"/>
    <property type="project" value="InterPro"/>
</dbReference>
<dbReference type="GO" id="GO:0008198">
    <property type="term" value="F:ferrous iron binding"/>
    <property type="evidence" value="ECO:0007669"/>
    <property type="project" value="TreeGrafter"/>
</dbReference>
<dbReference type="GO" id="GO:0016226">
    <property type="term" value="P:iron-sulfur cluster assembly"/>
    <property type="evidence" value="ECO:0007669"/>
    <property type="project" value="UniProtKB-UniRule"/>
</dbReference>
<dbReference type="CDD" id="cd00503">
    <property type="entry name" value="Frataxin"/>
    <property type="match status" value="1"/>
</dbReference>
<dbReference type="FunFam" id="3.30.920.10:FF:000001">
    <property type="entry name" value="Iron-sulfur cluster assembly protein CyaY"/>
    <property type="match status" value="1"/>
</dbReference>
<dbReference type="Gene3D" id="3.30.920.10">
    <property type="entry name" value="Frataxin/CyaY"/>
    <property type="match status" value="1"/>
</dbReference>
<dbReference type="HAMAP" id="MF_00142">
    <property type="entry name" value="CyaY"/>
    <property type="match status" value="1"/>
</dbReference>
<dbReference type="InterPro" id="IPR047584">
    <property type="entry name" value="CyaY"/>
</dbReference>
<dbReference type="InterPro" id="IPR002908">
    <property type="entry name" value="Frataxin/CyaY"/>
</dbReference>
<dbReference type="InterPro" id="IPR036524">
    <property type="entry name" value="Frataxin/CyaY_sf"/>
</dbReference>
<dbReference type="InterPro" id="IPR020895">
    <property type="entry name" value="Frataxin_CS"/>
</dbReference>
<dbReference type="NCBIfam" id="TIGR03421">
    <property type="entry name" value="FeS_CyaY"/>
    <property type="match status" value="1"/>
</dbReference>
<dbReference type="PANTHER" id="PTHR16821">
    <property type="entry name" value="FRATAXIN"/>
    <property type="match status" value="1"/>
</dbReference>
<dbReference type="PANTHER" id="PTHR16821:SF2">
    <property type="entry name" value="FRATAXIN, MITOCHONDRIAL"/>
    <property type="match status" value="1"/>
</dbReference>
<dbReference type="Pfam" id="PF01491">
    <property type="entry name" value="Frataxin_Cyay"/>
    <property type="match status" value="1"/>
</dbReference>
<dbReference type="SMART" id="SM01219">
    <property type="entry name" value="Frataxin_Cyay"/>
    <property type="match status" value="1"/>
</dbReference>
<dbReference type="SUPFAM" id="SSF55387">
    <property type="entry name" value="Frataxin/Nqo15-like"/>
    <property type="match status" value="1"/>
</dbReference>
<dbReference type="PROSITE" id="PS01344">
    <property type="entry name" value="FRATAXIN_1"/>
    <property type="match status" value="1"/>
</dbReference>
<dbReference type="PROSITE" id="PS50810">
    <property type="entry name" value="FRATAXIN_2"/>
    <property type="match status" value="1"/>
</dbReference>
<feature type="chain" id="PRO_1000010969" description="Iron-sulfur cluster assembly protein CyaY">
    <location>
        <begin position="1"/>
        <end position="106"/>
    </location>
</feature>
<comment type="function">
    <text evidence="1">Involved in iron-sulfur (Fe-S) cluster assembly. May act as a regulator of Fe-S biogenesis.</text>
</comment>
<comment type="similarity">
    <text evidence="1">Belongs to the frataxin family.</text>
</comment>
<name>CYAY_YERPP</name>
<evidence type="ECO:0000255" key="1">
    <source>
        <dbReference type="HAMAP-Rule" id="MF_00142"/>
    </source>
</evidence>
<protein>
    <recommendedName>
        <fullName evidence="1">Iron-sulfur cluster assembly protein CyaY</fullName>
    </recommendedName>
</protein>
<reference key="1">
    <citation type="submission" date="2007-02" db="EMBL/GenBank/DDBJ databases">
        <title>Complete sequence of chromosome of Yersinia pestis Pestoides F.</title>
        <authorList>
            <consortium name="US DOE Joint Genome Institute"/>
            <person name="Copeland A."/>
            <person name="Lucas S."/>
            <person name="Lapidus A."/>
            <person name="Barry K."/>
            <person name="Detter J.C."/>
            <person name="Glavina del Rio T."/>
            <person name="Hammon N."/>
            <person name="Israni S."/>
            <person name="Dalin E."/>
            <person name="Tice H."/>
            <person name="Pitluck S."/>
            <person name="Di Bartolo G."/>
            <person name="Chain P."/>
            <person name="Malfatti S."/>
            <person name="Shin M."/>
            <person name="Vergez L."/>
            <person name="Schmutz J."/>
            <person name="Larimer F."/>
            <person name="Land M."/>
            <person name="Hauser L."/>
            <person name="Worsham P."/>
            <person name="Chu M."/>
            <person name="Bearden S."/>
            <person name="Garcia E."/>
            <person name="Richardson P."/>
        </authorList>
    </citation>
    <scope>NUCLEOTIDE SEQUENCE [LARGE SCALE GENOMIC DNA]</scope>
    <source>
        <strain>Pestoides F</strain>
    </source>
</reference>